<proteinExistence type="inferred from homology"/>
<sequence length="510" mass="56165">MTLLSRVLGLVRDVVIAHLIGAGAAADVFLFANRIPNFLRRLFAEGAFSQAFVPVLAEYQQSGDMNKTREFIGKVSGTLGGLVSIVTILAMVGSPHVAALFGMGWFTDWMNDGPDAHKFEQASLLLKITFPYLWFVTFVAFSGAVLNTIGKFGVMSFSPVLLNIAMIATALFLAPQMDNPDLALAIGIFLGGLLQFLFQIPFMKQAGLLVKPKWAWRDEGVTKIRKLMIPALFGVSVSQINLLLDTVIASFLMTGSISWLYYSDRLLEFPLGLFGIAISTVILPTLARHHVNREGDSAKSAVDFRNTMDWGVRMIFLLGVPAAIGIAVLAQPMLLTLFMRGNFMLNDVYAASYSLRAFNAGLLSFMLIKILANGYYARQDTKTPVKIGIIAMVSNMGFNLLAIPFSYVGLAIASAMSATLNAYLLYRGLAKADVYHFSRKSAVFFVKVLLAAIAMGAAVWYYVPEINQWAKMDFFMRVYWLVWLIVLAAIVYGATLILLGVRKHHLLTKN</sequence>
<feature type="chain" id="PRO_0000182008" description="Probable lipid II flippase MurJ">
    <location>
        <begin position="1"/>
        <end position="510"/>
    </location>
</feature>
<feature type="transmembrane region" description="Helical" evidence="1">
    <location>
        <begin position="13"/>
        <end position="33"/>
    </location>
</feature>
<feature type="transmembrane region" description="Helical" evidence="1">
    <location>
        <begin position="81"/>
        <end position="101"/>
    </location>
</feature>
<feature type="transmembrane region" description="Helical" evidence="1">
    <location>
        <begin position="130"/>
        <end position="150"/>
    </location>
</feature>
<feature type="transmembrane region" description="Helical" evidence="1">
    <location>
        <begin position="154"/>
        <end position="174"/>
    </location>
</feature>
<feature type="transmembrane region" description="Helical" evidence="1">
    <location>
        <begin position="182"/>
        <end position="202"/>
    </location>
</feature>
<feature type="transmembrane region" description="Helical" evidence="1">
    <location>
        <begin position="240"/>
        <end position="260"/>
    </location>
</feature>
<feature type="transmembrane region" description="Helical" evidence="1">
    <location>
        <begin position="266"/>
        <end position="286"/>
    </location>
</feature>
<feature type="transmembrane region" description="Helical" evidence="1">
    <location>
        <begin position="315"/>
        <end position="335"/>
    </location>
</feature>
<feature type="transmembrane region" description="Helical" evidence="1">
    <location>
        <begin position="357"/>
        <end position="377"/>
    </location>
</feature>
<feature type="transmembrane region" description="Helical" evidence="1">
    <location>
        <begin position="396"/>
        <end position="416"/>
    </location>
</feature>
<feature type="transmembrane region" description="Helical" evidence="1">
    <location>
        <begin position="443"/>
        <end position="463"/>
    </location>
</feature>
<feature type="transmembrane region" description="Helical" evidence="1">
    <location>
        <begin position="481"/>
        <end position="501"/>
    </location>
</feature>
<comment type="function">
    <text evidence="1">Involved in peptidoglycan biosynthesis. Transports lipid-linked peptidoglycan precursors from the inner to the outer leaflet of the cytoplasmic membrane.</text>
</comment>
<comment type="pathway">
    <text evidence="1">Cell wall biogenesis; peptidoglycan biosynthesis.</text>
</comment>
<comment type="subcellular location">
    <subcellularLocation>
        <location evidence="1">Cell inner membrane</location>
        <topology evidence="1">Multi-pass membrane protein</topology>
    </subcellularLocation>
</comment>
<comment type="similarity">
    <text evidence="1">Belongs to the MurJ/MviN family.</text>
</comment>
<organism>
    <name type="scientific">Haemophilus influenzae (strain ATCC 51907 / DSM 11121 / KW20 / Rd)</name>
    <dbReference type="NCBI Taxonomy" id="71421"/>
    <lineage>
        <taxon>Bacteria</taxon>
        <taxon>Pseudomonadati</taxon>
        <taxon>Pseudomonadota</taxon>
        <taxon>Gammaproteobacteria</taxon>
        <taxon>Pasteurellales</taxon>
        <taxon>Pasteurellaceae</taxon>
        <taxon>Haemophilus</taxon>
    </lineage>
</organism>
<accession>P44958</accession>
<dbReference type="EMBL" id="L42023">
    <property type="protein sequence ID" value="AAC22623.1"/>
    <property type="molecule type" value="Genomic_DNA"/>
</dbReference>
<dbReference type="PIR" id="I64162">
    <property type="entry name" value="I64162"/>
</dbReference>
<dbReference type="RefSeq" id="NP_439125.1">
    <property type="nucleotide sequence ID" value="NC_000907.1"/>
</dbReference>
<dbReference type="SMR" id="P44958"/>
<dbReference type="STRING" id="71421.HI_0964"/>
<dbReference type="EnsemblBacteria" id="AAC22623">
    <property type="protein sequence ID" value="AAC22623"/>
    <property type="gene ID" value="HI_0964"/>
</dbReference>
<dbReference type="KEGG" id="hin:HI_0964"/>
<dbReference type="PATRIC" id="fig|71421.8.peg.1006"/>
<dbReference type="eggNOG" id="COG0728">
    <property type="taxonomic scope" value="Bacteria"/>
</dbReference>
<dbReference type="HOGENOM" id="CLU_006797_5_3_6"/>
<dbReference type="OrthoDB" id="9816572at2"/>
<dbReference type="PhylomeDB" id="P44958"/>
<dbReference type="BioCyc" id="HINF71421:G1GJ1-1005-MONOMER"/>
<dbReference type="UniPathway" id="UPA00219"/>
<dbReference type="Proteomes" id="UP000000579">
    <property type="component" value="Chromosome"/>
</dbReference>
<dbReference type="GO" id="GO:0005886">
    <property type="term" value="C:plasma membrane"/>
    <property type="evidence" value="ECO:0000318"/>
    <property type="project" value="GO_Central"/>
</dbReference>
<dbReference type="GO" id="GO:0015648">
    <property type="term" value="F:lipid-linked peptidoglycan transporter activity"/>
    <property type="evidence" value="ECO:0000318"/>
    <property type="project" value="GO_Central"/>
</dbReference>
<dbReference type="GO" id="GO:0071555">
    <property type="term" value="P:cell wall organization"/>
    <property type="evidence" value="ECO:0007669"/>
    <property type="project" value="UniProtKB-KW"/>
</dbReference>
<dbReference type="GO" id="GO:0034204">
    <property type="term" value="P:lipid translocation"/>
    <property type="evidence" value="ECO:0000318"/>
    <property type="project" value="GO_Central"/>
</dbReference>
<dbReference type="GO" id="GO:0015836">
    <property type="term" value="P:lipid-linked peptidoglycan transport"/>
    <property type="evidence" value="ECO:0000318"/>
    <property type="project" value="GO_Central"/>
</dbReference>
<dbReference type="GO" id="GO:0009252">
    <property type="term" value="P:peptidoglycan biosynthetic process"/>
    <property type="evidence" value="ECO:0000318"/>
    <property type="project" value="GO_Central"/>
</dbReference>
<dbReference type="GO" id="GO:0008360">
    <property type="term" value="P:regulation of cell shape"/>
    <property type="evidence" value="ECO:0007669"/>
    <property type="project" value="UniProtKB-KW"/>
</dbReference>
<dbReference type="CDD" id="cd13123">
    <property type="entry name" value="MATE_MurJ_like"/>
    <property type="match status" value="1"/>
</dbReference>
<dbReference type="HAMAP" id="MF_02078">
    <property type="entry name" value="MurJ_MviN"/>
    <property type="match status" value="1"/>
</dbReference>
<dbReference type="InterPro" id="IPR051050">
    <property type="entry name" value="Lipid_II_flippase_MurJ/MviN"/>
</dbReference>
<dbReference type="InterPro" id="IPR004268">
    <property type="entry name" value="MurJ"/>
</dbReference>
<dbReference type="NCBIfam" id="TIGR01695">
    <property type="entry name" value="murJ_mviN"/>
    <property type="match status" value="1"/>
</dbReference>
<dbReference type="PANTHER" id="PTHR47019">
    <property type="entry name" value="LIPID II FLIPPASE MURJ"/>
    <property type="match status" value="1"/>
</dbReference>
<dbReference type="PANTHER" id="PTHR47019:SF1">
    <property type="entry name" value="LIPID II FLIPPASE MURJ"/>
    <property type="match status" value="1"/>
</dbReference>
<dbReference type="Pfam" id="PF03023">
    <property type="entry name" value="MurJ"/>
    <property type="match status" value="1"/>
</dbReference>
<dbReference type="PIRSF" id="PIRSF002869">
    <property type="entry name" value="MviN"/>
    <property type="match status" value="1"/>
</dbReference>
<dbReference type="PRINTS" id="PR01806">
    <property type="entry name" value="VIRFACTRMVIN"/>
</dbReference>
<keyword id="KW-0997">Cell inner membrane</keyword>
<keyword id="KW-1003">Cell membrane</keyword>
<keyword id="KW-0133">Cell shape</keyword>
<keyword id="KW-0961">Cell wall biogenesis/degradation</keyword>
<keyword id="KW-0472">Membrane</keyword>
<keyword id="KW-0573">Peptidoglycan synthesis</keyword>
<keyword id="KW-1185">Reference proteome</keyword>
<keyword id="KW-0812">Transmembrane</keyword>
<keyword id="KW-1133">Transmembrane helix</keyword>
<keyword id="KW-0813">Transport</keyword>
<name>MURJ_HAEIN</name>
<evidence type="ECO:0000255" key="1">
    <source>
        <dbReference type="HAMAP-Rule" id="MF_02078"/>
    </source>
</evidence>
<protein>
    <recommendedName>
        <fullName evidence="1">Probable lipid II flippase MurJ</fullName>
    </recommendedName>
</protein>
<reference key="1">
    <citation type="journal article" date="1995" name="Science">
        <title>Whole-genome random sequencing and assembly of Haemophilus influenzae Rd.</title>
        <authorList>
            <person name="Fleischmann R.D."/>
            <person name="Adams M.D."/>
            <person name="White O."/>
            <person name="Clayton R.A."/>
            <person name="Kirkness E.F."/>
            <person name="Kerlavage A.R."/>
            <person name="Bult C.J."/>
            <person name="Tomb J.-F."/>
            <person name="Dougherty B.A."/>
            <person name="Merrick J.M."/>
            <person name="McKenney K."/>
            <person name="Sutton G.G."/>
            <person name="FitzHugh W."/>
            <person name="Fields C.A."/>
            <person name="Gocayne J.D."/>
            <person name="Scott J.D."/>
            <person name="Shirley R."/>
            <person name="Liu L.-I."/>
            <person name="Glodek A."/>
            <person name="Kelley J.M."/>
            <person name="Weidman J.F."/>
            <person name="Phillips C.A."/>
            <person name="Spriggs T."/>
            <person name="Hedblom E."/>
            <person name="Cotton M.D."/>
            <person name="Utterback T.R."/>
            <person name="Hanna M.C."/>
            <person name="Nguyen D.T."/>
            <person name="Saudek D.M."/>
            <person name="Brandon R.C."/>
            <person name="Fine L.D."/>
            <person name="Fritchman J.L."/>
            <person name="Fuhrmann J.L."/>
            <person name="Geoghagen N.S.M."/>
            <person name="Gnehm C.L."/>
            <person name="McDonald L.A."/>
            <person name="Small K.V."/>
            <person name="Fraser C.M."/>
            <person name="Smith H.O."/>
            <person name="Venter J.C."/>
        </authorList>
    </citation>
    <scope>NUCLEOTIDE SEQUENCE [LARGE SCALE GENOMIC DNA]</scope>
    <source>
        <strain>ATCC 51907 / DSM 11121 / KW20 / Rd</strain>
    </source>
</reference>
<gene>
    <name evidence="1" type="primary">murJ</name>
    <name type="synonym">mviN</name>
    <name type="ordered locus">HI_0964</name>
</gene>